<gene>
    <name evidence="5" type="primary">CYP71DD6</name>
    <name evidence="4" type="synonym">CYP71B4</name>
    <name evidence="5" type="synonym">ES</name>
    <name evidence="7" type="ordered locus">HannXRQ_Chr03g0072541</name>
</gene>
<accession>F8S1H8</accession>
<accession>A0A251V7A7</accession>
<organism>
    <name type="scientific">Helianthus annuus</name>
    <name type="common">Common sunflower</name>
    <dbReference type="NCBI Taxonomy" id="4232"/>
    <lineage>
        <taxon>Eukaryota</taxon>
        <taxon>Viridiplantae</taxon>
        <taxon>Streptophyta</taxon>
        <taxon>Embryophyta</taxon>
        <taxon>Tracheophyta</taxon>
        <taxon>Spermatophyta</taxon>
        <taxon>Magnoliopsida</taxon>
        <taxon>eudicotyledons</taxon>
        <taxon>Gunneridae</taxon>
        <taxon>Pentapetalae</taxon>
        <taxon>asterids</taxon>
        <taxon>campanulids</taxon>
        <taxon>Asterales</taxon>
        <taxon>Asteraceae</taxon>
        <taxon>Asteroideae</taxon>
        <taxon>Heliantheae alliance</taxon>
        <taxon>Heliantheae</taxon>
        <taxon>Helianthus</taxon>
    </lineage>
</organism>
<feature type="chain" id="PRO_0000448397" description="Eupatolide synthase">
    <location>
        <begin position="1"/>
        <end position="491"/>
    </location>
</feature>
<feature type="transmembrane region" description="Helical; Signal-anchor for type II membrane protein" evidence="2">
    <location>
        <begin position="7"/>
        <end position="27"/>
    </location>
</feature>
<feature type="binding site" description="axial binding residue" evidence="1">
    <location>
        <position position="430"/>
    </location>
    <ligand>
        <name>heme</name>
        <dbReference type="ChEBI" id="CHEBI:30413"/>
    </ligand>
    <ligandPart>
        <name>Fe</name>
        <dbReference type="ChEBI" id="CHEBI:18248"/>
    </ligandPart>
</feature>
<evidence type="ECO:0000250" key="1">
    <source>
        <dbReference type="UniProtKB" id="P04798"/>
    </source>
</evidence>
<evidence type="ECO:0000255" key="2"/>
<evidence type="ECO:0000269" key="3">
    <source>
    </source>
</evidence>
<evidence type="ECO:0000303" key="4">
    <source>
    </source>
</evidence>
<evidence type="ECO:0000303" key="5">
    <source>
    </source>
</evidence>
<evidence type="ECO:0000305" key="6"/>
<evidence type="ECO:0000312" key="7">
    <source>
        <dbReference type="EMBL" id="OTG31169.1"/>
    </source>
</evidence>
<comment type="function">
    <text evidence="3">Involved in the biosynthesis of germacrene-derived sesquiterpene lactones (PubMed:29758164). Hydroxylates 8-beta-hydroxy-germacrene A acid to 6-alpha,8-beta-hydroxy-germacrene A acid, which, in turn, undergo spontaneous lactonization to become eupatolide (PubMed:29758164).</text>
</comment>
<comment type="catalytic activity">
    <reaction evidence="3">
        <text>8beta-hydroxygermacra-1(10),4,11(13)-trien-12-oate + reduced [NADPH--hemoprotein reductase] + O2 = eupatolide + oxidized [NADPH--hemoprotein reductase] + 2 H2O</text>
        <dbReference type="Rhea" id="RHEA:57972"/>
        <dbReference type="Rhea" id="RHEA-COMP:11964"/>
        <dbReference type="Rhea" id="RHEA-COMP:11965"/>
        <dbReference type="ChEBI" id="CHEBI:4935"/>
        <dbReference type="ChEBI" id="CHEBI:15377"/>
        <dbReference type="ChEBI" id="CHEBI:15379"/>
        <dbReference type="ChEBI" id="CHEBI:57618"/>
        <dbReference type="ChEBI" id="CHEBI:58210"/>
        <dbReference type="ChEBI" id="CHEBI:142464"/>
        <dbReference type="EC" id="1.14.14.169"/>
    </reaction>
    <physiologicalReaction direction="left-to-right" evidence="3">
        <dbReference type="Rhea" id="RHEA:57973"/>
    </physiologicalReaction>
</comment>
<comment type="cofactor">
    <cofactor evidence="1">
        <name>heme</name>
        <dbReference type="ChEBI" id="CHEBI:30413"/>
    </cofactor>
</comment>
<comment type="pathway">
    <text evidence="3">Secondary metabolite biosynthesis; terpenoid biosynthesis.</text>
</comment>
<comment type="subcellular location">
    <subcellularLocation>
        <location evidence="2">Membrane</location>
        <topology evidence="2">Single-pass type II membrane protein</topology>
    </subcellularLocation>
</comment>
<comment type="tissue specificity">
    <text evidence="3">Expressed in leaf primordia.</text>
</comment>
<comment type="developmental stage">
    <text evidence="3">In developing leaves, expressed at very low levels in young leaf primordia, but strongly induced after the fourth and fifth days following leaf primordia initiation.</text>
</comment>
<comment type="similarity">
    <text evidence="6">Belongs to the cytochrome P450 family.</text>
</comment>
<comment type="sequence caution" evidence="6">
    <conflict type="erroneous initiation">
        <sequence resource="EMBL-CDS" id="OTG31169"/>
    </conflict>
    <text>Truncated N-terminus.</text>
</comment>
<protein>
    <recommendedName>
        <fullName evidence="5">Eupatolide synthase</fullName>
        <shortName evidence="5">HaES</shortName>
        <ecNumber evidence="3">1.14.14.169</ecNumber>
    </recommendedName>
    <alternativeName>
        <fullName evidence="4">Cytochrome P450 71B4</fullName>
    </alternativeName>
    <alternativeName>
        <fullName evidence="5">Cytochrome P450 71DD6</fullName>
    </alternativeName>
</protein>
<dbReference type="EC" id="1.14.14.169" evidence="3"/>
<dbReference type="EMBL" id="HQ439596">
    <property type="protein sequence ID" value="AEI59778.1"/>
    <property type="molecule type" value="mRNA"/>
</dbReference>
<dbReference type="EMBL" id="CM007892">
    <property type="protein sequence ID" value="OTG31169.1"/>
    <property type="status" value="ALT_INIT"/>
    <property type="molecule type" value="Genomic_DNA"/>
</dbReference>
<dbReference type="SMR" id="F8S1H8"/>
<dbReference type="STRING" id="4232.F8S1H8"/>
<dbReference type="InParanoid" id="F8S1H8"/>
<dbReference type="UniPathway" id="UPA00213"/>
<dbReference type="Proteomes" id="UP000215914">
    <property type="component" value="Chromosome 3"/>
</dbReference>
<dbReference type="GO" id="GO:0016020">
    <property type="term" value="C:membrane"/>
    <property type="evidence" value="ECO:0007669"/>
    <property type="project" value="UniProtKB-SubCell"/>
</dbReference>
<dbReference type="GO" id="GO:0106244">
    <property type="term" value="F:eupatolide synthase activity"/>
    <property type="evidence" value="ECO:0000314"/>
    <property type="project" value="UniProtKB"/>
</dbReference>
<dbReference type="GO" id="GO:0020037">
    <property type="term" value="F:heme binding"/>
    <property type="evidence" value="ECO:0007669"/>
    <property type="project" value="InterPro"/>
</dbReference>
<dbReference type="GO" id="GO:0005506">
    <property type="term" value="F:iron ion binding"/>
    <property type="evidence" value="ECO:0007669"/>
    <property type="project" value="InterPro"/>
</dbReference>
<dbReference type="GO" id="GO:0016705">
    <property type="term" value="F:oxidoreductase activity, acting on paired donors, with incorporation or reduction of molecular oxygen"/>
    <property type="evidence" value="ECO:0007669"/>
    <property type="project" value="InterPro"/>
</dbReference>
<dbReference type="GO" id="GO:0051762">
    <property type="term" value="P:sesquiterpene biosynthetic process"/>
    <property type="evidence" value="ECO:0000314"/>
    <property type="project" value="UniProtKB"/>
</dbReference>
<dbReference type="GO" id="GO:0016114">
    <property type="term" value="P:terpenoid biosynthetic process"/>
    <property type="evidence" value="ECO:0007669"/>
    <property type="project" value="UniProtKB-UniPathway"/>
</dbReference>
<dbReference type="Gene3D" id="1.10.630.10">
    <property type="entry name" value="Cytochrome P450"/>
    <property type="match status" value="1"/>
</dbReference>
<dbReference type="InterPro" id="IPR001128">
    <property type="entry name" value="Cyt_P450"/>
</dbReference>
<dbReference type="InterPro" id="IPR017972">
    <property type="entry name" value="Cyt_P450_CS"/>
</dbReference>
<dbReference type="InterPro" id="IPR002401">
    <property type="entry name" value="Cyt_P450_E_grp-I"/>
</dbReference>
<dbReference type="InterPro" id="IPR036396">
    <property type="entry name" value="Cyt_P450_sf"/>
</dbReference>
<dbReference type="PANTHER" id="PTHR47955">
    <property type="entry name" value="CYTOCHROME P450 FAMILY 71 PROTEIN"/>
    <property type="match status" value="1"/>
</dbReference>
<dbReference type="PANTHER" id="PTHR47955:SF9">
    <property type="entry name" value="PREMNASPIRODIENE OXYGENASE-LIKE"/>
    <property type="match status" value="1"/>
</dbReference>
<dbReference type="Pfam" id="PF00067">
    <property type="entry name" value="p450"/>
    <property type="match status" value="1"/>
</dbReference>
<dbReference type="PRINTS" id="PR00463">
    <property type="entry name" value="EP450I"/>
</dbReference>
<dbReference type="PRINTS" id="PR00385">
    <property type="entry name" value="P450"/>
</dbReference>
<dbReference type="SUPFAM" id="SSF48264">
    <property type="entry name" value="Cytochrome P450"/>
    <property type="match status" value="1"/>
</dbReference>
<dbReference type="PROSITE" id="PS00086">
    <property type="entry name" value="CYTOCHROME_P450"/>
    <property type="match status" value="1"/>
</dbReference>
<keyword id="KW-0349">Heme</keyword>
<keyword id="KW-0408">Iron</keyword>
<keyword id="KW-0472">Membrane</keyword>
<keyword id="KW-0479">Metal-binding</keyword>
<keyword id="KW-0503">Monooxygenase</keyword>
<keyword id="KW-0560">Oxidoreductase</keyword>
<keyword id="KW-1185">Reference proteome</keyword>
<keyword id="KW-0735">Signal-anchor</keyword>
<keyword id="KW-0812">Transmembrane</keyword>
<keyword id="KW-1133">Transmembrane helix</keyword>
<name>C7DD6_HELAN</name>
<sequence length="491" mass="56027">MDFLTYLPSWLLPAVVILTISCILMLWTKPSKGASGLNLPPGPPSLPLIGNLHQLIGKSFHETVYKLAEKYGPIMHIHMGSQPVVVISSSALATEAFKTHDHILANRQYSNNLRRLTFDYNDIAWAPYGDHSKHMRRVLVTEFLNSRMSKSFKKVLDMEVKSMLDNLPYGTETNLNKVFGNFVCDFTSKVVTGKSYRDVKIRGKTMKEMLDEMIILFSGSFSEIFPKYGWILEDLSGWTRRVDKHMANYNDLLELMIDEHLDHTSEDEKDMIDACRPLLNREEMKAIMSNVYNGAIDTSYLTLVWAMSEIVKNPRVMHKLQDEIRSNAGNKARLDETDTSKMTYLKYVVKETLRRHGPSPFLIPRDCVSHIQIGGYDILPGTKVLINAWGIAKDPKVWTENANEFHPDRFENHVLEQFHMVPFGGGRRACPGYNFATLNIEVVLANLLYSIDWKLPPGLTLEDFNMEEEGSLLVTKKTPLYLVPIKHNTQA</sequence>
<reference key="1">
    <citation type="journal article" date="2011" name="J. Biol. Chem.">
        <title>Lettuce costunolide synthase (CYP71BL2) and its homolog (CYP71BL1) from sunflower catalyze distinct regio- and stereoselective hydroxylations in sesquiterpene lactone metabolism.</title>
        <authorList>
            <person name="Ikezawa N."/>
            <person name="Gopfert J.C."/>
            <person name="Nguyen D.T."/>
            <person name="Kim S.U."/>
            <person name="O'Maille P.E."/>
            <person name="Spring O."/>
            <person name="Ro D.K."/>
        </authorList>
    </citation>
    <scope>NUCLEOTIDE SEQUENCE [MRNA]</scope>
    <source>
        <strain>cv. HA300</strain>
    </source>
</reference>
<reference key="2">
    <citation type="journal article" date="2017" name="Nature">
        <title>The sunflower genome provides insights into oil metabolism, flowering and Asterid evolution.</title>
        <authorList>
            <person name="Badouin H."/>
            <person name="Gouzy J."/>
            <person name="Grassa C.J."/>
            <person name="Murat F."/>
            <person name="Staton S.E."/>
            <person name="Cottret L."/>
            <person name="Lelandais-Briere C."/>
            <person name="Owens G.L."/>
            <person name="Carrere S."/>
            <person name="Mayjonade B."/>
            <person name="Legrand L."/>
            <person name="Gill N."/>
            <person name="Kane N.C."/>
            <person name="Bowers J.E."/>
            <person name="Hubner S."/>
            <person name="Bellec A."/>
            <person name="Berard A."/>
            <person name="Berges H."/>
            <person name="Blanchet N."/>
            <person name="Boniface M.C."/>
            <person name="Brunel D."/>
            <person name="Catrice O."/>
            <person name="Chaidir N."/>
            <person name="Claudel C."/>
            <person name="Donnadieu C."/>
            <person name="Faraut T."/>
            <person name="Fievet G."/>
            <person name="Helmstetter N."/>
            <person name="King M."/>
            <person name="Knapp S.J."/>
            <person name="Lai Z."/>
            <person name="Le Paslier M.C."/>
            <person name="Lippi Y."/>
            <person name="Lorenzon L."/>
            <person name="Mandel J.R."/>
            <person name="Marage G."/>
            <person name="Marchand G."/>
            <person name="Marquand E."/>
            <person name="Bret-Mestries E."/>
            <person name="Morien E."/>
            <person name="Nambeesan S."/>
            <person name="Nguyen T."/>
            <person name="Pegot-Espagnet P."/>
            <person name="Pouilly N."/>
            <person name="Raftis F."/>
            <person name="Sallet E."/>
            <person name="Schiex T."/>
            <person name="Thomas J."/>
            <person name="Vandecasteele C."/>
            <person name="Vares D."/>
            <person name="Vear F."/>
            <person name="Vautrin S."/>
            <person name="Crespi M."/>
            <person name="Mangin B."/>
            <person name="Burke J.M."/>
            <person name="Salse J."/>
            <person name="Munos S."/>
            <person name="Vincourt P."/>
            <person name="Rieseberg L.H."/>
            <person name="Langlade N.B."/>
        </authorList>
    </citation>
    <scope>NUCLEOTIDE SEQUENCE [LARGE SCALE GENOMIC DNA]</scope>
    <source>
        <strain>cv. SF193</strain>
    </source>
</reference>
<reference key="3">
    <citation type="journal article" date="2018" name="ACS Chem. Biol.">
        <title>Biosynthesis of eupatolide-A metabolic route for sesquiterpene lactone formation involving the P450 enzyme CYP71DD6.</title>
        <authorList>
            <person name="Frey M."/>
            <person name="Schmauder K."/>
            <person name="Pateraki I."/>
            <person name="Spring O."/>
        </authorList>
    </citation>
    <scope>FUNCTION</scope>
    <scope>CATALYTIC ACTIVITY</scope>
    <scope>PATHWAY</scope>
    <scope>DEVELOPMENTAL STAGE</scope>
    <scope>TISSUE SPECIFICITY</scope>
</reference>
<proteinExistence type="evidence at protein level"/>